<keyword id="KW-0418">Kinase</keyword>
<keyword id="KW-0547">Nucleotide-binding</keyword>
<keyword id="KW-1185">Reference proteome</keyword>
<keyword id="KW-0723">Serine/threonine-protein kinase</keyword>
<keyword id="KW-0808">Transferase</keyword>
<evidence type="ECO:0000255" key="1">
    <source>
        <dbReference type="HAMAP-Rule" id="MF_00921"/>
    </source>
</evidence>
<gene>
    <name type="ordered locus">Sala_2842</name>
</gene>
<feature type="chain" id="PRO_0000316745" description="Putative pyruvate, phosphate dikinase regulatory protein">
    <location>
        <begin position="1"/>
        <end position="270"/>
    </location>
</feature>
<feature type="binding site" evidence="1">
    <location>
        <begin position="149"/>
        <end position="156"/>
    </location>
    <ligand>
        <name>ADP</name>
        <dbReference type="ChEBI" id="CHEBI:456216"/>
    </ligand>
</feature>
<proteinExistence type="inferred from homology"/>
<accession>Q1GP75</accession>
<name>PDRP_SPHAL</name>
<comment type="function">
    <text evidence="1">Bifunctional serine/threonine kinase and phosphorylase involved in the regulation of the pyruvate, phosphate dikinase (PPDK) by catalyzing its phosphorylation/dephosphorylation.</text>
</comment>
<comment type="catalytic activity">
    <reaction evidence="1">
        <text>N(tele)-phospho-L-histidyl/L-threonyl-[pyruvate, phosphate dikinase] + ADP = N(tele)-phospho-L-histidyl/O-phospho-L-threonyl-[pyruvate, phosphate dikinase] + AMP + H(+)</text>
        <dbReference type="Rhea" id="RHEA:43692"/>
        <dbReference type="Rhea" id="RHEA-COMP:10650"/>
        <dbReference type="Rhea" id="RHEA-COMP:10651"/>
        <dbReference type="ChEBI" id="CHEBI:15378"/>
        <dbReference type="ChEBI" id="CHEBI:30013"/>
        <dbReference type="ChEBI" id="CHEBI:61977"/>
        <dbReference type="ChEBI" id="CHEBI:83586"/>
        <dbReference type="ChEBI" id="CHEBI:456215"/>
        <dbReference type="ChEBI" id="CHEBI:456216"/>
        <dbReference type="EC" id="2.7.11.32"/>
    </reaction>
</comment>
<comment type="catalytic activity">
    <reaction evidence="1">
        <text>N(tele)-phospho-L-histidyl/O-phospho-L-threonyl-[pyruvate, phosphate dikinase] + phosphate + H(+) = N(tele)-phospho-L-histidyl/L-threonyl-[pyruvate, phosphate dikinase] + diphosphate</text>
        <dbReference type="Rhea" id="RHEA:43696"/>
        <dbReference type="Rhea" id="RHEA-COMP:10650"/>
        <dbReference type="Rhea" id="RHEA-COMP:10651"/>
        <dbReference type="ChEBI" id="CHEBI:15378"/>
        <dbReference type="ChEBI" id="CHEBI:30013"/>
        <dbReference type="ChEBI" id="CHEBI:33019"/>
        <dbReference type="ChEBI" id="CHEBI:43474"/>
        <dbReference type="ChEBI" id="CHEBI:61977"/>
        <dbReference type="ChEBI" id="CHEBI:83586"/>
        <dbReference type="EC" id="2.7.4.27"/>
    </reaction>
</comment>
<comment type="similarity">
    <text evidence="1">Belongs to the pyruvate, phosphate/water dikinase regulatory protein family. PDRP subfamily.</text>
</comment>
<reference key="1">
    <citation type="journal article" date="2009" name="Proc. Natl. Acad. Sci. U.S.A.">
        <title>The genomic basis of trophic strategy in marine bacteria.</title>
        <authorList>
            <person name="Lauro F.M."/>
            <person name="McDougald D."/>
            <person name="Thomas T."/>
            <person name="Williams T.J."/>
            <person name="Egan S."/>
            <person name="Rice S."/>
            <person name="DeMaere M.Z."/>
            <person name="Ting L."/>
            <person name="Ertan H."/>
            <person name="Johnson J."/>
            <person name="Ferriera S."/>
            <person name="Lapidus A."/>
            <person name="Anderson I."/>
            <person name="Kyrpides N."/>
            <person name="Munk A.C."/>
            <person name="Detter C."/>
            <person name="Han C.S."/>
            <person name="Brown M.V."/>
            <person name="Robb F.T."/>
            <person name="Kjelleberg S."/>
            <person name="Cavicchioli R."/>
        </authorList>
    </citation>
    <scope>NUCLEOTIDE SEQUENCE [LARGE SCALE GENOMIC DNA]</scope>
    <source>
        <strain>DSM 13593 / LMG 18877 / RB2256</strain>
    </source>
</reference>
<organism>
    <name type="scientific">Sphingopyxis alaskensis (strain DSM 13593 / LMG 18877 / RB2256)</name>
    <name type="common">Sphingomonas alaskensis</name>
    <dbReference type="NCBI Taxonomy" id="317655"/>
    <lineage>
        <taxon>Bacteria</taxon>
        <taxon>Pseudomonadati</taxon>
        <taxon>Pseudomonadota</taxon>
        <taxon>Alphaproteobacteria</taxon>
        <taxon>Sphingomonadales</taxon>
        <taxon>Sphingomonadaceae</taxon>
        <taxon>Sphingopyxis</taxon>
    </lineage>
</organism>
<dbReference type="EC" id="2.7.11.32" evidence="1"/>
<dbReference type="EC" id="2.7.4.27" evidence="1"/>
<dbReference type="EMBL" id="CP000356">
    <property type="protein sequence ID" value="ABF54547.1"/>
    <property type="molecule type" value="Genomic_DNA"/>
</dbReference>
<dbReference type="RefSeq" id="WP_011543111.1">
    <property type="nucleotide sequence ID" value="NC_008048.1"/>
</dbReference>
<dbReference type="SMR" id="Q1GP75"/>
<dbReference type="STRING" id="317655.Sala_2842"/>
<dbReference type="KEGG" id="sal:Sala_2842"/>
<dbReference type="eggNOG" id="COG1806">
    <property type="taxonomic scope" value="Bacteria"/>
</dbReference>
<dbReference type="HOGENOM" id="CLU_046206_2_0_5"/>
<dbReference type="OrthoDB" id="9782201at2"/>
<dbReference type="Proteomes" id="UP000006578">
    <property type="component" value="Chromosome"/>
</dbReference>
<dbReference type="GO" id="GO:0043531">
    <property type="term" value="F:ADP binding"/>
    <property type="evidence" value="ECO:0007669"/>
    <property type="project" value="UniProtKB-UniRule"/>
</dbReference>
<dbReference type="GO" id="GO:0005524">
    <property type="term" value="F:ATP binding"/>
    <property type="evidence" value="ECO:0007669"/>
    <property type="project" value="InterPro"/>
</dbReference>
<dbReference type="GO" id="GO:0016776">
    <property type="term" value="F:phosphotransferase activity, phosphate group as acceptor"/>
    <property type="evidence" value="ECO:0007669"/>
    <property type="project" value="UniProtKB-UniRule"/>
</dbReference>
<dbReference type="GO" id="GO:0004674">
    <property type="term" value="F:protein serine/threonine kinase activity"/>
    <property type="evidence" value="ECO:0007669"/>
    <property type="project" value="UniProtKB-UniRule"/>
</dbReference>
<dbReference type="HAMAP" id="MF_00921">
    <property type="entry name" value="PDRP"/>
    <property type="match status" value="1"/>
</dbReference>
<dbReference type="InterPro" id="IPR005177">
    <property type="entry name" value="Kinase-pyrophosphorylase"/>
</dbReference>
<dbReference type="InterPro" id="IPR026565">
    <property type="entry name" value="PPDK_reg"/>
</dbReference>
<dbReference type="NCBIfam" id="NF003742">
    <property type="entry name" value="PRK05339.1"/>
    <property type="match status" value="1"/>
</dbReference>
<dbReference type="PANTHER" id="PTHR31756">
    <property type="entry name" value="PYRUVATE, PHOSPHATE DIKINASE REGULATORY PROTEIN 1, CHLOROPLASTIC"/>
    <property type="match status" value="1"/>
</dbReference>
<dbReference type="PANTHER" id="PTHR31756:SF3">
    <property type="entry name" value="PYRUVATE, PHOSPHATE DIKINASE REGULATORY PROTEIN 1, CHLOROPLASTIC"/>
    <property type="match status" value="1"/>
</dbReference>
<dbReference type="Pfam" id="PF03618">
    <property type="entry name" value="Kinase-PPPase"/>
    <property type="match status" value="1"/>
</dbReference>
<sequence length="270" mass="30021">MSRLHLHLISDSTGETLENIAKAAIAQFDDVEVVRHFWPMVRSESHLDRIMAEVRASPGMILFTLVNGELRSSLERRARMLDLPTVAALDAVTDALSRMLGQEAKARPGRQHVLDAAYFARVEAIQFTVAHDDGIGWENWEQADIILAGVSRTSKTPTSIYLANRGFKTANIPIVPESPPPSALFNLKRPMVVGLTTGLDRLVQVRRNRLLSLNQAPETSYVDDERVKAELAFARRMFADNGWPVIDVTRRSIEETAAAVIKLVEDRASA</sequence>
<protein>
    <recommendedName>
        <fullName evidence="1">Putative pyruvate, phosphate dikinase regulatory protein</fullName>
        <shortName evidence="1">PPDK regulatory protein</shortName>
        <ecNumber evidence="1">2.7.11.32</ecNumber>
        <ecNumber evidence="1">2.7.4.27</ecNumber>
    </recommendedName>
</protein>